<evidence type="ECO:0000255" key="1">
    <source>
        <dbReference type="HAMAP-Rule" id="MF_00236"/>
    </source>
</evidence>
<evidence type="ECO:0000256" key="2">
    <source>
        <dbReference type="SAM" id="MobiDB-lite"/>
    </source>
</evidence>
<gene>
    <name evidence="1" type="primary">tatA</name>
    <name type="ordered locus">STY3586</name>
    <name type="ordered locus">t3324</name>
</gene>
<accession>P0A2H4</accession>
<accession>P57045</accession>
<comment type="function">
    <text evidence="1">Part of the twin-arginine translocation (Tat) system that transports large folded proteins containing a characteristic twin-arginine motif in their signal peptide across membranes. TatA could form the protein-conducting channel of the Tat system.</text>
</comment>
<comment type="subunit">
    <text evidence="1">The Tat system comprises two distinct complexes: a TatABC complex, containing multiple copies of TatA, TatB and TatC subunits, and a separate TatA complex, containing only TatA subunits. Substrates initially bind to the TatABC complex, which probably triggers association of the separate TatA complex to form the active translocon.</text>
</comment>
<comment type="subcellular location">
    <subcellularLocation>
        <location evidence="1">Cell inner membrane</location>
        <topology evidence="1">Single-pass membrane protein</topology>
    </subcellularLocation>
</comment>
<comment type="similarity">
    <text evidence="1">Belongs to the TatA/E family.</text>
</comment>
<sequence>MGGISIWQLLIVAVIVVLLFGTKKLGSIGSDLGASIKGFKKAMSDDDAKQDKTSQDADFTAKSIADKQGEAKKEDAKSQDKEQV</sequence>
<reference key="1">
    <citation type="journal article" date="2001" name="Nature">
        <title>Complete genome sequence of a multiple drug resistant Salmonella enterica serovar Typhi CT18.</title>
        <authorList>
            <person name="Parkhill J."/>
            <person name="Dougan G."/>
            <person name="James K.D."/>
            <person name="Thomson N.R."/>
            <person name="Pickard D."/>
            <person name="Wain J."/>
            <person name="Churcher C.M."/>
            <person name="Mungall K.L."/>
            <person name="Bentley S.D."/>
            <person name="Holden M.T.G."/>
            <person name="Sebaihia M."/>
            <person name="Baker S."/>
            <person name="Basham D."/>
            <person name="Brooks K."/>
            <person name="Chillingworth T."/>
            <person name="Connerton P."/>
            <person name="Cronin A."/>
            <person name="Davis P."/>
            <person name="Davies R.M."/>
            <person name="Dowd L."/>
            <person name="White N."/>
            <person name="Farrar J."/>
            <person name="Feltwell T."/>
            <person name="Hamlin N."/>
            <person name="Haque A."/>
            <person name="Hien T.T."/>
            <person name="Holroyd S."/>
            <person name="Jagels K."/>
            <person name="Krogh A."/>
            <person name="Larsen T.S."/>
            <person name="Leather S."/>
            <person name="Moule S."/>
            <person name="O'Gaora P."/>
            <person name="Parry C."/>
            <person name="Quail M.A."/>
            <person name="Rutherford K.M."/>
            <person name="Simmonds M."/>
            <person name="Skelton J."/>
            <person name="Stevens K."/>
            <person name="Whitehead S."/>
            <person name="Barrell B.G."/>
        </authorList>
    </citation>
    <scope>NUCLEOTIDE SEQUENCE [LARGE SCALE GENOMIC DNA]</scope>
    <source>
        <strain>CT18</strain>
    </source>
</reference>
<reference key="2">
    <citation type="journal article" date="2003" name="J. Bacteriol.">
        <title>Comparative genomics of Salmonella enterica serovar Typhi strains Ty2 and CT18.</title>
        <authorList>
            <person name="Deng W."/>
            <person name="Liou S.-R."/>
            <person name="Plunkett G. III"/>
            <person name="Mayhew G.F."/>
            <person name="Rose D.J."/>
            <person name="Burland V."/>
            <person name="Kodoyianni V."/>
            <person name="Schwartz D.C."/>
            <person name="Blattner F.R."/>
        </authorList>
    </citation>
    <scope>NUCLEOTIDE SEQUENCE [LARGE SCALE GENOMIC DNA]</scope>
    <source>
        <strain>ATCC 700931 / Ty2</strain>
    </source>
</reference>
<keyword id="KW-0997">Cell inner membrane</keyword>
<keyword id="KW-1003">Cell membrane</keyword>
<keyword id="KW-0472">Membrane</keyword>
<keyword id="KW-0653">Protein transport</keyword>
<keyword id="KW-0811">Translocation</keyword>
<keyword id="KW-0812">Transmembrane</keyword>
<keyword id="KW-1133">Transmembrane helix</keyword>
<keyword id="KW-0813">Transport</keyword>
<dbReference type="EMBL" id="AL513382">
    <property type="protein sequence ID" value="CAD07919.1"/>
    <property type="molecule type" value="Genomic_DNA"/>
</dbReference>
<dbReference type="EMBL" id="AE014613">
    <property type="protein sequence ID" value="AAO70852.1"/>
    <property type="molecule type" value="Genomic_DNA"/>
</dbReference>
<dbReference type="RefSeq" id="NP_457778.1">
    <property type="nucleotide sequence ID" value="NC_003198.1"/>
</dbReference>
<dbReference type="RefSeq" id="WP_000508972.1">
    <property type="nucleotide sequence ID" value="NZ_WSUR01000033.1"/>
</dbReference>
<dbReference type="SMR" id="P0A2H4"/>
<dbReference type="STRING" id="220341.gene:17587438"/>
<dbReference type="GeneID" id="66758253"/>
<dbReference type="KEGG" id="stt:t3324"/>
<dbReference type="KEGG" id="sty:STY3586"/>
<dbReference type="PATRIC" id="fig|220341.7.peg.3653"/>
<dbReference type="eggNOG" id="COG1826">
    <property type="taxonomic scope" value="Bacteria"/>
</dbReference>
<dbReference type="HOGENOM" id="CLU_086034_5_1_6"/>
<dbReference type="OMA" id="KAMGDDQ"/>
<dbReference type="OrthoDB" id="7066617at2"/>
<dbReference type="Proteomes" id="UP000000541">
    <property type="component" value="Chromosome"/>
</dbReference>
<dbReference type="Proteomes" id="UP000002670">
    <property type="component" value="Chromosome"/>
</dbReference>
<dbReference type="GO" id="GO:0033281">
    <property type="term" value="C:TAT protein transport complex"/>
    <property type="evidence" value="ECO:0007669"/>
    <property type="project" value="UniProtKB-UniRule"/>
</dbReference>
<dbReference type="GO" id="GO:0008320">
    <property type="term" value="F:protein transmembrane transporter activity"/>
    <property type="evidence" value="ECO:0007669"/>
    <property type="project" value="UniProtKB-UniRule"/>
</dbReference>
<dbReference type="GO" id="GO:0043953">
    <property type="term" value="P:protein transport by the Tat complex"/>
    <property type="evidence" value="ECO:0007669"/>
    <property type="project" value="UniProtKB-UniRule"/>
</dbReference>
<dbReference type="FunFam" id="1.20.5.3310:FF:000001">
    <property type="entry name" value="Probable Sec-independent protein translocase protein TatE"/>
    <property type="match status" value="1"/>
</dbReference>
<dbReference type="Gene3D" id="1.20.5.3310">
    <property type="match status" value="1"/>
</dbReference>
<dbReference type="HAMAP" id="MF_00236">
    <property type="entry name" value="TatA_E"/>
    <property type="match status" value="1"/>
</dbReference>
<dbReference type="InterPro" id="IPR003369">
    <property type="entry name" value="TatA/B/E"/>
</dbReference>
<dbReference type="InterPro" id="IPR006312">
    <property type="entry name" value="TatA/E"/>
</dbReference>
<dbReference type="NCBIfam" id="NF002922">
    <property type="entry name" value="PRK03554.1"/>
    <property type="match status" value="1"/>
</dbReference>
<dbReference type="NCBIfam" id="TIGR01411">
    <property type="entry name" value="tatAE"/>
    <property type="match status" value="1"/>
</dbReference>
<dbReference type="PANTHER" id="PTHR42982">
    <property type="entry name" value="SEC-INDEPENDENT PROTEIN TRANSLOCASE PROTEIN TATA"/>
    <property type="match status" value="1"/>
</dbReference>
<dbReference type="PANTHER" id="PTHR42982:SF1">
    <property type="entry name" value="SEC-INDEPENDENT PROTEIN TRANSLOCASE PROTEIN TATA"/>
    <property type="match status" value="1"/>
</dbReference>
<dbReference type="Pfam" id="PF02416">
    <property type="entry name" value="TatA_B_E"/>
    <property type="match status" value="1"/>
</dbReference>
<proteinExistence type="inferred from homology"/>
<feature type="chain" id="PRO_0000097958" description="Sec-independent protein translocase protein TatA">
    <location>
        <begin position="1"/>
        <end position="84"/>
    </location>
</feature>
<feature type="transmembrane region" description="Helical" evidence="1">
    <location>
        <begin position="1"/>
        <end position="21"/>
    </location>
</feature>
<feature type="region of interest" description="Disordered" evidence="2">
    <location>
        <begin position="42"/>
        <end position="84"/>
    </location>
</feature>
<feature type="compositionally biased region" description="Basic and acidic residues" evidence="2">
    <location>
        <begin position="42"/>
        <end position="55"/>
    </location>
</feature>
<feature type="compositionally biased region" description="Basic and acidic residues" evidence="2">
    <location>
        <begin position="64"/>
        <end position="84"/>
    </location>
</feature>
<organism>
    <name type="scientific">Salmonella typhi</name>
    <dbReference type="NCBI Taxonomy" id="90370"/>
    <lineage>
        <taxon>Bacteria</taxon>
        <taxon>Pseudomonadati</taxon>
        <taxon>Pseudomonadota</taxon>
        <taxon>Gammaproteobacteria</taxon>
        <taxon>Enterobacterales</taxon>
        <taxon>Enterobacteriaceae</taxon>
        <taxon>Salmonella</taxon>
    </lineage>
</organism>
<name>TATA_SALTI</name>
<protein>
    <recommendedName>
        <fullName evidence="1">Sec-independent protein translocase protein TatA</fullName>
    </recommendedName>
</protein>